<name>LRP_HAEIN</name>
<comment type="function">
    <text evidence="1">Mediates a global response to leucine. Exogenous leucine affects the expression of a number of different operons; lrp mediates this effect for at least some of these operons (By similarity).</text>
</comment>
<comment type="subunit">
    <text evidence="1">Homodimer.</text>
</comment>
<proteinExistence type="inferred from homology"/>
<protein>
    <recommendedName>
        <fullName>Leucine-responsive regulatory protein</fullName>
    </recommendedName>
</protein>
<gene>
    <name type="primary">lrp</name>
    <name type="ordered locus">HI_1596</name>
</gene>
<feature type="chain" id="PRO_0000111731" description="Leucine-responsive regulatory protein">
    <location>
        <begin position="1"/>
        <end position="166"/>
    </location>
</feature>
<feature type="domain" description="HTH asnC-type" evidence="2">
    <location>
        <begin position="16"/>
        <end position="91"/>
    </location>
</feature>
<feature type="DNA-binding region" description="H-T-H motif" evidence="2">
    <location>
        <begin position="35"/>
        <end position="54"/>
    </location>
</feature>
<organism>
    <name type="scientific">Haemophilus influenzae (strain ATCC 51907 / DSM 11121 / KW20 / Rd)</name>
    <dbReference type="NCBI Taxonomy" id="71421"/>
    <lineage>
        <taxon>Bacteria</taxon>
        <taxon>Pseudomonadati</taxon>
        <taxon>Pseudomonadota</taxon>
        <taxon>Gammaproteobacteria</taxon>
        <taxon>Pasteurellales</taxon>
        <taxon>Pasteurellaceae</taxon>
        <taxon>Haemophilus</taxon>
    </lineage>
</organism>
<reference key="1">
    <citation type="journal article" date="1995" name="Science">
        <title>Whole-genome random sequencing and assembly of Haemophilus influenzae Rd.</title>
        <authorList>
            <person name="Fleischmann R.D."/>
            <person name="Adams M.D."/>
            <person name="White O."/>
            <person name="Clayton R.A."/>
            <person name="Kirkness E.F."/>
            <person name="Kerlavage A.R."/>
            <person name="Bult C.J."/>
            <person name="Tomb J.-F."/>
            <person name="Dougherty B.A."/>
            <person name="Merrick J.M."/>
            <person name="McKenney K."/>
            <person name="Sutton G.G."/>
            <person name="FitzHugh W."/>
            <person name="Fields C.A."/>
            <person name="Gocayne J.D."/>
            <person name="Scott J.D."/>
            <person name="Shirley R."/>
            <person name="Liu L.-I."/>
            <person name="Glodek A."/>
            <person name="Kelley J.M."/>
            <person name="Weidman J.F."/>
            <person name="Phillips C.A."/>
            <person name="Spriggs T."/>
            <person name="Hedblom E."/>
            <person name="Cotton M.D."/>
            <person name="Utterback T.R."/>
            <person name="Hanna M.C."/>
            <person name="Nguyen D.T."/>
            <person name="Saudek D.M."/>
            <person name="Brandon R.C."/>
            <person name="Fine L.D."/>
            <person name="Fritchman J.L."/>
            <person name="Fuhrmann J.L."/>
            <person name="Geoghagen N.S.M."/>
            <person name="Gnehm C.L."/>
            <person name="McDonald L.A."/>
            <person name="Small K.V."/>
            <person name="Fraser C.M."/>
            <person name="Smith H.O."/>
            <person name="Venter J.C."/>
        </authorList>
    </citation>
    <scope>NUCLEOTIDE SEQUENCE [LARGE SCALE GENOMIC DNA]</scope>
    <source>
        <strain>ATCC 51907 / DSM 11121 / KW20 / Rd</strain>
    </source>
</reference>
<keyword id="KW-0010">Activator</keyword>
<keyword id="KW-0238">DNA-binding</keyword>
<keyword id="KW-1185">Reference proteome</keyword>
<keyword id="KW-0804">Transcription</keyword>
<keyword id="KW-0805">Transcription regulation</keyword>
<evidence type="ECO:0000250" key="1"/>
<evidence type="ECO:0000255" key="2">
    <source>
        <dbReference type="PROSITE-ProRule" id="PRU00319"/>
    </source>
</evidence>
<accession>P45265</accession>
<sequence length="166" mass="18910">MSKEIKKMEKKRNKALDAIDIKILNELQRNGKISNIDLSKKVGLSPTPCLERVKRLEKQGVIMGYRALLNPELLDAPLLVIVEITLVRGKPDVFEEFNAAIQALEEIQECHLVSGDFDYLLKTRVADMAEYRKLLGTTLLRLPGVNDTRTYVVMEEVKQTNFLVLK</sequence>
<dbReference type="EMBL" id="L42023">
    <property type="protein sequence ID" value="AAC23241.1"/>
    <property type="molecule type" value="Genomic_DNA"/>
</dbReference>
<dbReference type="PIR" id="H64131">
    <property type="entry name" value="H64131"/>
</dbReference>
<dbReference type="RefSeq" id="NP_439738.2">
    <property type="nucleotide sequence ID" value="NC_000907.1"/>
</dbReference>
<dbReference type="SMR" id="P45265"/>
<dbReference type="STRING" id="71421.HI_1596"/>
<dbReference type="EnsemblBacteria" id="AAC23241">
    <property type="protein sequence ID" value="AAC23241"/>
    <property type="gene ID" value="HI_1596"/>
</dbReference>
<dbReference type="KEGG" id="hin:HI_1596"/>
<dbReference type="PATRIC" id="fig|71421.8.peg.1669"/>
<dbReference type="eggNOG" id="COG1522">
    <property type="taxonomic scope" value="Bacteria"/>
</dbReference>
<dbReference type="HOGENOM" id="CLU_091233_0_0_6"/>
<dbReference type="OrthoDB" id="166264at2"/>
<dbReference type="PhylomeDB" id="P45265"/>
<dbReference type="Proteomes" id="UP000000579">
    <property type="component" value="Chromosome"/>
</dbReference>
<dbReference type="GO" id="GO:0005829">
    <property type="term" value="C:cytosol"/>
    <property type="evidence" value="ECO:0000318"/>
    <property type="project" value="GO_Central"/>
</dbReference>
<dbReference type="GO" id="GO:0043565">
    <property type="term" value="F:sequence-specific DNA binding"/>
    <property type="evidence" value="ECO:0000318"/>
    <property type="project" value="GO_Central"/>
</dbReference>
<dbReference type="GO" id="GO:0006524">
    <property type="term" value="P:alanine catabolic process"/>
    <property type="evidence" value="ECO:0000318"/>
    <property type="project" value="GO_Central"/>
</dbReference>
<dbReference type="GO" id="GO:0043201">
    <property type="term" value="P:response to L-leucine"/>
    <property type="evidence" value="ECO:0000318"/>
    <property type="project" value="GO_Central"/>
</dbReference>
<dbReference type="CDD" id="cd00090">
    <property type="entry name" value="HTH_ARSR"/>
    <property type="match status" value="1"/>
</dbReference>
<dbReference type="FunFam" id="1.10.10.10:FF:000015">
    <property type="entry name" value="Leucine-responsive transcriptional regulator Lrp"/>
    <property type="match status" value="1"/>
</dbReference>
<dbReference type="FunFam" id="3.30.70.920:FF:000001">
    <property type="entry name" value="Transcriptional regulator, AsnC family"/>
    <property type="match status" value="1"/>
</dbReference>
<dbReference type="Gene3D" id="3.30.70.920">
    <property type="match status" value="1"/>
</dbReference>
<dbReference type="Gene3D" id="1.10.10.10">
    <property type="entry name" value="Winged helix-like DNA-binding domain superfamily/Winged helix DNA-binding domain"/>
    <property type="match status" value="1"/>
</dbReference>
<dbReference type="InterPro" id="IPR011991">
    <property type="entry name" value="ArsR-like_HTH"/>
</dbReference>
<dbReference type="InterPro" id="IPR000485">
    <property type="entry name" value="AsnC-type_HTH_dom"/>
</dbReference>
<dbReference type="InterPro" id="IPR011008">
    <property type="entry name" value="Dimeric_a/b-barrel"/>
</dbReference>
<dbReference type="InterPro" id="IPR019888">
    <property type="entry name" value="Tscrpt_reg_AsnC-like"/>
</dbReference>
<dbReference type="InterPro" id="IPR019887">
    <property type="entry name" value="Tscrpt_reg_AsnC/Lrp_C"/>
</dbReference>
<dbReference type="InterPro" id="IPR019885">
    <property type="entry name" value="Tscrpt_reg_HTH_AsnC-type_CS"/>
</dbReference>
<dbReference type="InterPro" id="IPR036388">
    <property type="entry name" value="WH-like_DNA-bd_sf"/>
</dbReference>
<dbReference type="InterPro" id="IPR036390">
    <property type="entry name" value="WH_DNA-bd_sf"/>
</dbReference>
<dbReference type="NCBIfam" id="NF008370">
    <property type="entry name" value="PRK11169.1"/>
    <property type="match status" value="1"/>
</dbReference>
<dbReference type="PANTHER" id="PTHR30154">
    <property type="entry name" value="LEUCINE-RESPONSIVE REGULATORY PROTEIN"/>
    <property type="match status" value="1"/>
</dbReference>
<dbReference type="PANTHER" id="PTHR30154:SF0">
    <property type="entry name" value="LEUCINE-RESPONSIVE REGULATORY PROTEIN"/>
    <property type="match status" value="1"/>
</dbReference>
<dbReference type="Pfam" id="PF01037">
    <property type="entry name" value="AsnC_trans_reg"/>
    <property type="match status" value="1"/>
</dbReference>
<dbReference type="Pfam" id="PF13412">
    <property type="entry name" value="HTH_24"/>
    <property type="match status" value="1"/>
</dbReference>
<dbReference type="PRINTS" id="PR00033">
    <property type="entry name" value="HTHASNC"/>
</dbReference>
<dbReference type="SMART" id="SM00344">
    <property type="entry name" value="HTH_ASNC"/>
    <property type="match status" value="1"/>
</dbReference>
<dbReference type="SUPFAM" id="SSF54909">
    <property type="entry name" value="Dimeric alpha+beta barrel"/>
    <property type="match status" value="1"/>
</dbReference>
<dbReference type="SUPFAM" id="SSF46785">
    <property type="entry name" value="Winged helix' DNA-binding domain"/>
    <property type="match status" value="1"/>
</dbReference>
<dbReference type="PROSITE" id="PS00519">
    <property type="entry name" value="HTH_ASNC_1"/>
    <property type="match status" value="1"/>
</dbReference>
<dbReference type="PROSITE" id="PS50956">
    <property type="entry name" value="HTH_ASNC_2"/>
    <property type="match status" value="1"/>
</dbReference>